<protein>
    <recommendedName>
        <fullName evidence="1">tRNA-specific adenosine deaminase</fullName>
        <ecNumber evidence="1">3.5.4.33</ecNumber>
    </recommendedName>
</protein>
<proteinExistence type="inferred from homology"/>
<comment type="function">
    <text evidence="1">Catalyzes the deamination of adenosine to inosine at the wobble position 34 of tRNA(Arg2).</text>
</comment>
<comment type="catalytic activity">
    <reaction evidence="1">
        <text>adenosine(34) in tRNA + H2O + H(+) = inosine(34) in tRNA + NH4(+)</text>
        <dbReference type="Rhea" id="RHEA:43168"/>
        <dbReference type="Rhea" id="RHEA-COMP:10373"/>
        <dbReference type="Rhea" id="RHEA-COMP:10374"/>
        <dbReference type="ChEBI" id="CHEBI:15377"/>
        <dbReference type="ChEBI" id="CHEBI:15378"/>
        <dbReference type="ChEBI" id="CHEBI:28938"/>
        <dbReference type="ChEBI" id="CHEBI:74411"/>
        <dbReference type="ChEBI" id="CHEBI:82852"/>
        <dbReference type="EC" id="3.5.4.33"/>
    </reaction>
</comment>
<comment type="cofactor">
    <cofactor evidence="1">
        <name>Zn(2+)</name>
        <dbReference type="ChEBI" id="CHEBI:29105"/>
    </cofactor>
    <text evidence="1">Binds 1 zinc ion per subunit.</text>
</comment>
<comment type="subunit">
    <text evidence="1">Homodimer.</text>
</comment>
<comment type="similarity">
    <text evidence="1">Belongs to the cytidine and deoxycytidylate deaminase family.</text>
</comment>
<comment type="sequence caution" evidence="3">
    <conflict type="erroneous initiation">
        <sequence resource="EMBL-CDS" id="BAC63253"/>
    </conflict>
    <text>Truncated N-terminus.</text>
</comment>
<name>TADA_STRPQ</name>
<keyword id="KW-0378">Hydrolase</keyword>
<keyword id="KW-0479">Metal-binding</keyword>
<keyword id="KW-0819">tRNA processing</keyword>
<keyword id="KW-0862">Zinc</keyword>
<accession>P0DA21</accession>
<accession>Q879N4</accession>
<accession>Q8K8Q9</accession>
<sequence>MPYSLEEQTYFMQEALKEAEKSLQKAEIPIGCVIVKDGEIIGRGHNAREESNQAIMHAEMMAINEANAHEGNWRLLDTTLFVTIEPCVMCSGAIGLARIPHVIYGASNQKFGGADSLYQILTDERLNHRVQVERGLLAADCANIMQTFFRQGRERKKIAKHLIKEQSDPFD</sequence>
<feature type="chain" id="PRO_0000411298" description="tRNA-specific adenosine deaminase">
    <location>
        <begin position="1"/>
        <end position="171"/>
    </location>
</feature>
<feature type="domain" description="CMP/dCMP-type deaminase" evidence="2">
    <location>
        <begin position="6"/>
        <end position="133"/>
    </location>
</feature>
<feature type="active site" description="Proton donor" evidence="1">
    <location>
        <position position="59"/>
    </location>
</feature>
<feature type="binding site" evidence="1">
    <location>
        <position position="57"/>
    </location>
    <ligand>
        <name>Zn(2+)</name>
        <dbReference type="ChEBI" id="CHEBI:29105"/>
        <note>catalytic</note>
    </ligand>
</feature>
<feature type="binding site" evidence="1">
    <location>
        <position position="87"/>
    </location>
    <ligand>
        <name>Zn(2+)</name>
        <dbReference type="ChEBI" id="CHEBI:29105"/>
        <note>catalytic</note>
    </ligand>
</feature>
<feature type="binding site" evidence="1">
    <location>
        <position position="90"/>
    </location>
    <ligand>
        <name>Zn(2+)</name>
        <dbReference type="ChEBI" id="CHEBI:29105"/>
        <note>catalytic</note>
    </ligand>
</feature>
<gene>
    <name evidence="1" type="primary">tadA</name>
    <name type="ordered locus">SPs0158</name>
</gene>
<dbReference type="EC" id="3.5.4.33" evidence="1"/>
<dbReference type="EMBL" id="BA000034">
    <property type="protein sequence ID" value="BAC63253.1"/>
    <property type="status" value="ALT_INIT"/>
    <property type="molecule type" value="Genomic_DNA"/>
</dbReference>
<dbReference type="RefSeq" id="WP_002992549.1">
    <property type="nucleotide sequence ID" value="NC_004606.1"/>
</dbReference>
<dbReference type="SMR" id="P0DA21"/>
<dbReference type="GeneID" id="69900154"/>
<dbReference type="KEGG" id="sps:SPs0158"/>
<dbReference type="HOGENOM" id="CLU_025810_3_2_9"/>
<dbReference type="GO" id="GO:0052717">
    <property type="term" value="F:tRNA-specific adenosine-34 deaminase activity"/>
    <property type="evidence" value="ECO:0007669"/>
    <property type="project" value="UniProtKB-UniRule"/>
</dbReference>
<dbReference type="GO" id="GO:0008270">
    <property type="term" value="F:zinc ion binding"/>
    <property type="evidence" value="ECO:0007669"/>
    <property type="project" value="UniProtKB-UniRule"/>
</dbReference>
<dbReference type="GO" id="GO:0002100">
    <property type="term" value="P:tRNA wobble adenosine to inosine editing"/>
    <property type="evidence" value="ECO:0007669"/>
    <property type="project" value="UniProtKB-UniRule"/>
</dbReference>
<dbReference type="CDD" id="cd01285">
    <property type="entry name" value="nucleoside_deaminase"/>
    <property type="match status" value="1"/>
</dbReference>
<dbReference type="FunFam" id="3.40.140.10:FF:000005">
    <property type="entry name" value="tRNA-specific adenosine deaminase"/>
    <property type="match status" value="1"/>
</dbReference>
<dbReference type="Gene3D" id="3.40.140.10">
    <property type="entry name" value="Cytidine Deaminase, domain 2"/>
    <property type="match status" value="1"/>
</dbReference>
<dbReference type="HAMAP" id="MF_00972">
    <property type="entry name" value="tRNA_aden_deaminase"/>
    <property type="match status" value="1"/>
</dbReference>
<dbReference type="InterPro" id="IPR016192">
    <property type="entry name" value="APOBEC/CMP_deaminase_Zn-bd"/>
</dbReference>
<dbReference type="InterPro" id="IPR002125">
    <property type="entry name" value="CMP_dCMP_dom"/>
</dbReference>
<dbReference type="InterPro" id="IPR016193">
    <property type="entry name" value="Cytidine_deaminase-like"/>
</dbReference>
<dbReference type="InterPro" id="IPR028883">
    <property type="entry name" value="tRNA_aden_deaminase"/>
</dbReference>
<dbReference type="NCBIfam" id="NF008113">
    <property type="entry name" value="PRK10860.1"/>
    <property type="match status" value="1"/>
</dbReference>
<dbReference type="PANTHER" id="PTHR11079">
    <property type="entry name" value="CYTOSINE DEAMINASE FAMILY MEMBER"/>
    <property type="match status" value="1"/>
</dbReference>
<dbReference type="PANTHER" id="PTHR11079:SF202">
    <property type="entry name" value="TRNA-SPECIFIC ADENOSINE DEAMINASE"/>
    <property type="match status" value="1"/>
</dbReference>
<dbReference type="Pfam" id="PF14437">
    <property type="entry name" value="MafB19-deam"/>
    <property type="match status" value="1"/>
</dbReference>
<dbReference type="SUPFAM" id="SSF53927">
    <property type="entry name" value="Cytidine deaminase-like"/>
    <property type="match status" value="1"/>
</dbReference>
<dbReference type="PROSITE" id="PS00903">
    <property type="entry name" value="CYT_DCMP_DEAMINASES_1"/>
    <property type="match status" value="1"/>
</dbReference>
<dbReference type="PROSITE" id="PS51747">
    <property type="entry name" value="CYT_DCMP_DEAMINASES_2"/>
    <property type="match status" value="1"/>
</dbReference>
<organism>
    <name type="scientific">Streptococcus pyogenes serotype M3 (strain SSI-1)</name>
    <dbReference type="NCBI Taxonomy" id="193567"/>
    <lineage>
        <taxon>Bacteria</taxon>
        <taxon>Bacillati</taxon>
        <taxon>Bacillota</taxon>
        <taxon>Bacilli</taxon>
        <taxon>Lactobacillales</taxon>
        <taxon>Streptococcaceae</taxon>
        <taxon>Streptococcus</taxon>
    </lineage>
</organism>
<reference key="1">
    <citation type="journal article" date="2003" name="Genome Res.">
        <title>Genome sequence of an M3 strain of Streptococcus pyogenes reveals a large-scale genomic rearrangement in invasive strains and new insights into phage evolution.</title>
        <authorList>
            <person name="Nakagawa I."/>
            <person name="Kurokawa K."/>
            <person name="Yamashita A."/>
            <person name="Nakata M."/>
            <person name="Tomiyasu Y."/>
            <person name="Okahashi N."/>
            <person name="Kawabata S."/>
            <person name="Yamazaki K."/>
            <person name="Shiba T."/>
            <person name="Yasunaga T."/>
            <person name="Hayashi H."/>
            <person name="Hattori M."/>
            <person name="Hamada S."/>
        </authorList>
    </citation>
    <scope>NUCLEOTIDE SEQUENCE [LARGE SCALE GENOMIC DNA]</scope>
    <source>
        <strain>SSI-1</strain>
    </source>
</reference>
<evidence type="ECO:0000255" key="1">
    <source>
        <dbReference type="HAMAP-Rule" id="MF_00972"/>
    </source>
</evidence>
<evidence type="ECO:0000255" key="2">
    <source>
        <dbReference type="PROSITE-ProRule" id="PRU01083"/>
    </source>
</evidence>
<evidence type="ECO:0000305" key="3"/>